<protein>
    <recommendedName>
        <fullName>Ribosome-inactivating protein charybdin</fullName>
        <ecNumber>3.2.2.22</ecNumber>
    </recommendedName>
    <alternativeName>
        <fullName>rRNA N-glycosidase</fullName>
    </alternativeName>
</protein>
<sequence>SQCKAMTVKFTVELDIERLTGQTYTDFIKNLRRSLATWYLHGVPVLPLYNQEADPRGFDLKLTFRGQVTTVRIHRDDLVLRGYQMQGAGKWLELERPSTQTGHLIEGSELLEFGPSYEELAAAAQQDILDISYNKNALQDAVSKLAVSTNTRDRARSLIVVSQMFCEATRFVDIANHFAFNLESSEPVKLPQWMQNDLEKNWVRFSFMILKSNADPCYKFEPQTIYGKIIKTADELLNFLGIVEQHPDTRSPPCAAG</sequence>
<name>RIP_DRIMA</name>
<evidence type="ECO:0000269" key="1">
    <source>
    </source>
</evidence>
<evidence type="ECO:0000305" key="2"/>
<evidence type="ECO:0007829" key="3">
    <source>
        <dbReference type="PDB" id="2B7U"/>
    </source>
</evidence>
<keyword id="KW-0002">3D-structure</keyword>
<keyword id="KW-0903">Direct protein sequencing</keyword>
<keyword id="KW-1015">Disulfide bond</keyword>
<keyword id="KW-0378">Hydrolase</keyword>
<keyword id="KW-0611">Plant defense</keyword>
<keyword id="KW-0652">Protein synthesis inhibitor</keyword>
<keyword id="KW-0800">Toxin</keyword>
<dbReference type="EC" id="3.2.2.22"/>
<dbReference type="EMBL" id="DQ323742">
    <property type="status" value="NOT_ANNOTATED_CDS"/>
    <property type="molecule type" value="Genomic_DNA"/>
</dbReference>
<dbReference type="PDB" id="2B7U">
    <property type="method" value="X-ray"/>
    <property type="resolution" value="1.60 A"/>
    <property type="chains" value="A=1-257"/>
</dbReference>
<dbReference type="PDBsum" id="2B7U"/>
<dbReference type="SMR" id="P84786"/>
<dbReference type="EvolutionaryTrace" id="P84786"/>
<dbReference type="GO" id="GO:0030598">
    <property type="term" value="F:rRNA N-glycosylase activity"/>
    <property type="evidence" value="ECO:0007669"/>
    <property type="project" value="UniProtKB-EC"/>
</dbReference>
<dbReference type="GO" id="GO:0090729">
    <property type="term" value="F:toxin activity"/>
    <property type="evidence" value="ECO:0007669"/>
    <property type="project" value="UniProtKB-KW"/>
</dbReference>
<dbReference type="GO" id="GO:0006952">
    <property type="term" value="P:defense response"/>
    <property type="evidence" value="ECO:0007669"/>
    <property type="project" value="UniProtKB-KW"/>
</dbReference>
<dbReference type="GO" id="GO:0017148">
    <property type="term" value="P:negative regulation of translation"/>
    <property type="evidence" value="ECO:0007669"/>
    <property type="project" value="UniProtKB-KW"/>
</dbReference>
<dbReference type="Gene3D" id="3.40.420.10">
    <property type="entry name" value="Ricin (A subunit), domain 1"/>
    <property type="match status" value="1"/>
</dbReference>
<dbReference type="Gene3D" id="4.10.470.10">
    <property type="entry name" value="Ricin (A Subunit), domain 2"/>
    <property type="match status" value="1"/>
</dbReference>
<dbReference type="InterPro" id="IPR036041">
    <property type="entry name" value="Ribosome-inact_prot_sf"/>
</dbReference>
<dbReference type="InterPro" id="IPR017989">
    <property type="entry name" value="Ribosome_inactivat_1/2"/>
</dbReference>
<dbReference type="InterPro" id="IPR001574">
    <property type="entry name" value="Ribosome_inactivat_prot"/>
</dbReference>
<dbReference type="InterPro" id="IPR016138">
    <property type="entry name" value="Ribosome_inactivat_prot_sub1"/>
</dbReference>
<dbReference type="InterPro" id="IPR016139">
    <property type="entry name" value="Ribosome_inactivat_prot_sub2"/>
</dbReference>
<dbReference type="PANTHER" id="PTHR33453">
    <property type="match status" value="1"/>
</dbReference>
<dbReference type="PANTHER" id="PTHR33453:SF9">
    <property type="entry name" value="ALBUMIN B-32"/>
    <property type="match status" value="1"/>
</dbReference>
<dbReference type="Pfam" id="PF00161">
    <property type="entry name" value="RIP"/>
    <property type="match status" value="1"/>
</dbReference>
<dbReference type="PRINTS" id="PR00396">
    <property type="entry name" value="SHIGARICIN"/>
</dbReference>
<dbReference type="SUPFAM" id="SSF56371">
    <property type="entry name" value="Ribosome inactivating proteins (RIP)"/>
    <property type="match status" value="1"/>
</dbReference>
<organism>
    <name type="scientific">Drimia maritima</name>
    <name type="common">Sea squill</name>
    <name type="synonym">Charybdis maritima</name>
    <dbReference type="NCBI Taxonomy" id="82070"/>
    <lineage>
        <taxon>Eukaryota</taxon>
        <taxon>Viridiplantae</taxon>
        <taxon>Streptophyta</taxon>
        <taxon>Embryophyta</taxon>
        <taxon>Tracheophyta</taxon>
        <taxon>Spermatophyta</taxon>
        <taxon>Magnoliopsida</taxon>
        <taxon>Liliopsida</taxon>
        <taxon>Asparagales</taxon>
        <taxon>Hyacinthaceae</taxon>
        <taxon>Urgineoideae</taxon>
        <taxon>Squilla</taxon>
    </lineage>
</organism>
<comment type="function">
    <text evidence="1">Inhibits translation in rabbit reticulocytes.</text>
</comment>
<comment type="catalytic activity">
    <reaction evidence="1">
        <text>Endohydrolysis of the N-glycosidic bond at one specific adenosine on the 28S rRNA.</text>
        <dbReference type="EC" id="3.2.2.22"/>
    </reaction>
</comment>
<comment type="similarity">
    <text evidence="1">Belongs to the ribosome-inactivating protein family. Type 1 RIP subfamily.</text>
</comment>
<accession>P84786</accession>
<reference evidence="2" key="1">
    <citation type="journal article" date="2006" name="FEBS J.">
        <title>Isolation, characterization, sequencing and crystal structure of charybdin, a type 1 ribosome-inactivating protein from Charybdis maritima agg.</title>
        <authorList>
            <person name="Touloupakis E."/>
            <person name="Gessmann R."/>
            <person name="Kavelaki K."/>
            <person name="Christofakis E."/>
            <person name="Petratos K."/>
            <person name="Ghanotakis D.F."/>
        </authorList>
    </citation>
    <scope>PROTEIN SEQUENCE OF 1-14 AND 242-257</scope>
    <scope>NUCLEOTIDE SEQUENCE [GENOMIC DNA] OF 4-252</scope>
    <scope>X-RAY CRYSTALLOGRAPHY (1.6 ANGSTROMS)</scope>
    <scope>FUNCTION</scope>
    <scope>CATALYTIC ACTIVITY</scope>
    <source>
        <tissue evidence="1">Bulb</tissue>
    </source>
</reference>
<proteinExistence type="evidence at protein level"/>
<feature type="chain" id="PRO_0000248258" description="Ribosome-inactivating protein charybdin">
    <location>
        <begin position="1"/>
        <end position="257"/>
    </location>
</feature>
<feature type="active site" evidence="1">
    <location>
        <position position="167"/>
    </location>
</feature>
<feature type="site" description="Important for catalytic activity" evidence="1">
    <location>
        <position position="79"/>
    </location>
</feature>
<feature type="site" description="Important for catalytic activity" evidence="1">
    <location>
        <position position="117"/>
    </location>
</feature>
<feature type="site" description="Important for catalytic activity" evidence="1">
    <location>
        <position position="170"/>
    </location>
</feature>
<feature type="disulfide bond" evidence="1">
    <location>
        <begin position="217"/>
        <end position="254"/>
    </location>
</feature>
<feature type="strand" evidence="3">
    <location>
        <begin position="7"/>
        <end position="16"/>
    </location>
</feature>
<feature type="helix" evidence="3">
    <location>
        <begin position="21"/>
        <end position="35"/>
    </location>
</feature>
<feature type="strand" evidence="3">
    <location>
        <begin position="37"/>
        <end position="40"/>
    </location>
</feature>
<feature type="strand" evidence="3">
    <location>
        <begin position="43"/>
        <end position="45"/>
    </location>
</feature>
<feature type="strand" evidence="3">
    <location>
        <begin position="56"/>
        <end position="64"/>
    </location>
</feature>
<feature type="strand" evidence="3">
    <location>
        <begin position="67"/>
        <end position="74"/>
    </location>
</feature>
<feature type="turn" evidence="3">
    <location>
        <begin position="75"/>
        <end position="77"/>
    </location>
</feature>
<feature type="strand" evidence="3">
    <location>
        <begin position="80"/>
        <end position="84"/>
    </location>
</feature>
<feature type="strand" evidence="3">
    <location>
        <begin position="86"/>
        <end position="88"/>
    </location>
</feature>
<feature type="strand" evidence="3">
    <location>
        <begin position="91"/>
        <end position="93"/>
    </location>
</feature>
<feature type="helix" evidence="3">
    <location>
        <begin position="117"/>
        <end position="124"/>
    </location>
</feature>
<feature type="helix" evidence="3">
    <location>
        <begin position="128"/>
        <end position="130"/>
    </location>
</feature>
<feature type="helix" evidence="3">
    <location>
        <begin position="135"/>
        <end position="147"/>
    </location>
</feature>
<feature type="helix" evidence="3">
    <location>
        <begin position="151"/>
        <end position="164"/>
    </location>
</feature>
<feature type="helix" evidence="3">
    <location>
        <begin position="166"/>
        <end position="170"/>
    </location>
</feature>
<feature type="helix" evidence="3">
    <location>
        <begin position="172"/>
        <end position="180"/>
    </location>
</feature>
<feature type="turn" evidence="3">
    <location>
        <begin position="181"/>
        <end position="183"/>
    </location>
</feature>
<feature type="helix" evidence="3">
    <location>
        <begin position="192"/>
        <end position="196"/>
    </location>
</feature>
<feature type="helix" evidence="3">
    <location>
        <begin position="199"/>
        <end position="201"/>
    </location>
</feature>
<feature type="helix" evidence="3">
    <location>
        <begin position="202"/>
        <end position="214"/>
    </location>
</feature>
<feature type="strand" evidence="3">
    <location>
        <begin position="223"/>
        <end position="225"/>
    </location>
</feature>
<feature type="strand" evidence="3">
    <location>
        <begin position="228"/>
        <end position="230"/>
    </location>
</feature>
<feature type="helix" evidence="3">
    <location>
        <begin position="233"/>
        <end position="237"/>
    </location>
</feature>
<feature type="strand" evidence="3">
    <location>
        <begin position="240"/>
        <end position="243"/>
    </location>
</feature>
<feature type="helix" evidence="3">
    <location>
        <begin position="247"/>
        <end position="250"/>
    </location>
</feature>